<evidence type="ECO:0000250" key="1">
    <source>
        <dbReference type="UniProtKB" id="Q3UMU9"/>
    </source>
</evidence>
<evidence type="ECO:0000250" key="2">
    <source>
        <dbReference type="UniProtKB" id="Q925G1"/>
    </source>
</evidence>
<evidence type="ECO:0000255" key="3"/>
<evidence type="ECO:0000255" key="4">
    <source>
        <dbReference type="PROSITE-ProRule" id="PRU00162"/>
    </source>
</evidence>
<evidence type="ECO:0000256" key="5">
    <source>
        <dbReference type="SAM" id="MobiDB-lite"/>
    </source>
</evidence>
<evidence type="ECO:0000269" key="6">
    <source>
    </source>
</evidence>
<evidence type="ECO:0000269" key="7">
    <source>
    </source>
</evidence>
<evidence type="ECO:0000269" key="8">
    <source>
    </source>
</evidence>
<evidence type="ECO:0000269" key="9">
    <source>
    </source>
</evidence>
<evidence type="ECO:0000303" key="10">
    <source>
    </source>
</evidence>
<evidence type="ECO:0000305" key="11"/>
<evidence type="ECO:0000312" key="12">
    <source>
        <dbReference type="EMBL" id="AAP97281.1"/>
    </source>
</evidence>
<evidence type="ECO:0000312" key="13">
    <source>
        <dbReference type="HGNC" id="HGNC:14680"/>
    </source>
</evidence>
<evidence type="ECO:0007744" key="14">
    <source>
    </source>
</evidence>
<evidence type="ECO:0007744" key="15">
    <source>
    </source>
</evidence>
<evidence type="ECO:0007744" key="16">
    <source>
    </source>
</evidence>
<evidence type="ECO:0007744" key="17">
    <source>
    </source>
</evidence>
<evidence type="ECO:0007744" key="18">
    <source>
    </source>
</evidence>
<evidence type="ECO:0007744" key="19">
    <source>
    </source>
</evidence>
<evidence type="ECO:0007744" key="20">
    <source>
    </source>
</evidence>
<evidence type="ECO:0007744" key="21">
    <source>
    </source>
</evidence>
<evidence type="ECO:0007829" key="22">
    <source>
        <dbReference type="PDB" id="3EAE"/>
    </source>
</evidence>
<evidence type="ECO:0007829" key="23">
    <source>
        <dbReference type="PDB" id="3QBY"/>
    </source>
</evidence>
<evidence type="ECO:0007829" key="24">
    <source>
        <dbReference type="PDB" id="6T3I"/>
    </source>
</evidence>
<protein>
    <recommendedName>
        <fullName>Hepatoma-derived growth factor-related protein 2</fullName>
        <shortName>HDGF-related protein 2</shortName>
        <shortName>HRP-2</shortName>
    </recommendedName>
    <alternativeName>
        <fullName>Hepatoma-derived growth factor 2</fullName>
        <shortName>HDGF-2</shortName>
    </alternativeName>
</protein>
<reference key="1">
    <citation type="submission" date="2000-08" db="EMBL/GenBank/DDBJ databases">
        <authorList>
            <person name="Yu L."/>
        </authorList>
    </citation>
    <scope>NUCLEOTIDE SEQUENCE [MRNA] (ISOFORM 1)</scope>
</reference>
<reference key="2">
    <citation type="journal article" date="2003" name="Genome Res.">
        <title>The secreted protein discovery initiative (SPDI), a large-scale effort to identify novel human secreted and transmembrane proteins: a bioinformatics assessment.</title>
        <authorList>
            <person name="Clark H.F."/>
            <person name="Gurney A.L."/>
            <person name="Abaya E."/>
            <person name="Baker K."/>
            <person name="Baldwin D.T."/>
            <person name="Brush J."/>
            <person name="Chen J."/>
            <person name="Chow B."/>
            <person name="Chui C."/>
            <person name="Crowley C."/>
            <person name="Currell B."/>
            <person name="Deuel B."/>
            <person name="Dowd P."/>
            <person name="Eaton D."/>
            <person name="Foster J.S."/>
            <person name="Grimaldi C."/>
            <person name="Gu Q."/>
            <person name="Hass P.E."/>
            <person name="Heldens S."/>
            <person name="Huang A."/>
            <person name="Kim H.S."/>
            <person name="Klimowski L."/>
            <person name="Jin Y."/>
            <person name="Johnson S."/>
            <person name="Lee J."/>
            <person name="Lewis L."/>
            <person name="Liao D."/>
            <person name="Mark M.R."/>
            <person name="Robbie E."/>
            <person name="Sanchez C."/>
            <person name="Schoenfeld J."/>
            <person name="Seshagiri S."/>
            <person name="Simmons L."/>
            <person name="Singh J."/>
            <person name="Smith V."/>
            <person name="Stinson J."/>
            <person name="Vagts A."/>
            <person name="Vandlen R.L."/>
            <person name="Watanabe C."/>
            <person name="Wieand D."/>
            <person name="Woods K."/>
            <person name="Xie M.-H."/>
            <person name="Yansura D.G."/>
            <person name="Yi S."/>
            <person name="Yu G."/>
            <person name="Yuan J."/>
            <person name="Zhang M."/>
            <person name="Zhang Z."/>
            <person name="Goddard A.D."/>
            <person name="Wood W.I."/>
            <person name="Godowski P.J."/>
            <person name="Gray A.M."/>
        </authorList>
    </citation>
    <scope>NUCLEOTIDE SEQUENCE [LARGE SCALE MRNA] (ISOFORM 1)</scope>
</reference>
<reference key="3">
    <citation type="journal article" date="2004" name="Nature">
        <title>The DNA sequence and biology of human chromosome 19.</title>
        <authorList>
            <person name="Grimwood J."/>
            <person name="Gordon L.A."/>
            <person name="Olsen A.S."/>
            <person name="Terry A."/>
            <person name="Schmutz J."/>
            <person name="Lamerdin J.E."/>
            <person name="Hellsten U."/>
            <person name="Goodstein D."/>
            <person name="Couronne O."/>
            <person name="Tran-Gyamfi M."/>
            <person name="Aerts A."/>
            <person name="Altherr M."/>
            <person name="Ashworth L."/>
            <person name="Bajorek E."/>
            <person name="Black S."/>
            <person name="Branscomb E."/>
            <person name="Caenepeel S."/>
            <person name="Carrano A.V."/>
            <person name="Caoile C."/>
            <person name="Chan Y.M."/>
            <person name="Christensen M."/>
            <person name="Cleland C.A."/>
            <person name="Copeland A."/>
            <person name="Dalin E."/>
            <person name="Dehal P."/>
            <person name="Denys M."/>
            <person name="Detter J.C."/>
            <person name="Escobar J."/>
            <person name="Flowers D."/>
            <person name="Fotopulos D."/>
            <person name="Garcia C."/>
            <person name="Georgescu A.M."/>
            <person name="Glavina T."/>
            <person name="Gomez M."/>
            <person name="Gonzales E."/>
            <person name="Groza M."/>
            <person name="Hammon N."/>
            <person name="Hawkins T."/>
            <person name="Haydu L."/>
            <person name="Ho I."/>
            <person name="Huang W."/>
            <person name="Israni S."/>
            <person name="Jett J."/>
            <person name="Kadner K."/>
            <person name="Kimball H."/>
            <person name="Kobayashi A."/>
            <person name="Larionov V."/>
            <person name="Leem S.-H."/>
            <person name="Lopez F."/>
            <person name="Lou Y."/>
            <person name="Lowry S."/>
            <person name="Malfatti S."/>
            <person name="Martinez D."/>
            <person name="McCready P.M."/>
            <person name="Medina C."/>
            <person name="Morgan J."/>
            <person name="Nelson K."/>
            <person name="Nolan M."/>
            <person name="Ovcharenko I."/>
            <person name="Pitluck S."/>
            <person name="Pollard M."/>
            <person name="Popkie A.P."/>
            <person name="Predki P."/>
            <person name="Quan G."/>
            <person name="Ramirez L."/>
            <person name="Rash S."/>
            <person name="Retterer J."/>
            <person name="Rodriguez A."/>
            <person name="Rogers S."/>
            <person name="Salamov A."/>
            <person name="Salazar A."/>
            <person name="She X."/>
            <person name="Smith D."/>
            <person name="Slezak T."/>
            <person name="Solovyev V."/>
            <person name="Thayer N."/>
            <person name="Tice H."/>
            <person name="Tsai M."/>
            <person name="Ustaszewska A."/>
            <person name="Vo N."/>
            <person name="Wagner M."/>
            <person name="Wheeler J."/>
            <person name="Wu K."/>
            <person name="Xie G."/>
            <person name="Yang J."/>
            <person name="Dubchak I."/>
            <person name="Furey T.S."/>
            <person name="DeJong P."/>
            <person name="Dickson M."/>
            <person name="Gordon D."/>
            <person name="Eichler E.E."/>
            <person name="Pennacchio L.A."/>
            <person name="Richardson P."/>
            <person name="Stubbs L."/>
            <person name="Rokhsar D.S."/>
            <person name="Myers R.M."/>
            <person name="Rubin E.M."/>
            <person name="Lucas S.M."/>
        </authorList>
    </citation>
    <scope>NUCLEOTIDE SEQUENCE [LARGE SCALE GENOMIC DNA]</scope>
</reference>
<reference key="4">
    <citation type="submission" date="2005-09" db="EMBL/GenBank/DDBJ databases">
        <authorList>
            <person name="Mural R.J."/>
            <person name="Istrail S."/>
            <person name="Sutton G.G."/>
            <person name="Florea L."/>
            <person name="Halpern A.L."/>
            <person name="Mobarry C.M."/>
            <person name="Lippert R."/>
            <person name="Walenz B."/>
            <person name="Shatkay H."/>
            <person name="Dew I."/>
            <person name="Miller J.R."/>
            <person name="Flanigan M.J."/>
            <person name="Edwards N.J."/>
            <person name="Bolanos R."/>
            <person name="Fasulo D."/>
            <person name="Halldorsson B.V."/>
            <person name="Hannenhalli S."/>
            <person name="Turner R."/>
            <person name="Yooseph S."/>
            <person name="Lu F."/>
            <person name="Nusskern D.R."/>
            <person name="Shue B.C."/>
            <person name="Zheng X.H."/>
            <person name="Zhong F."/>
            <person name="Delcher A.L."/>
            <person name="Huson D.H."/>
            <person name="Kravitz S.A."/>
            <person name="Mouchard L."/>
            <person name="Reinert K."/>
            <person name="Remington K.A."/>
            <person name="Clark A.G."/>
            <person name="Waterman M.S."/>
            <person name="Eichler E.E."/>
            <person name="Adams M.D."/>
            <person name="Hunkapiller M.W."/>
            <person name="Myers E.W."/>
            <person name="Venter J.C."/>
        </authorList>
    </citation>
    <scope>NUCLEOTIDE SEQUENCE [LARGE SCALE GENOMIC DNA]</scope>
</reference>
<reference key="5">
    <citation type="journal article" date="2004" name="Genome Res.">
        <title>The status, quality, and expansion of the NIH full-length cDNA project: the Mammalian Gene Collection (MGC).</title>
        <authorList>
            <consortium name="The MGC Project Team"/>
        </authorList>
    </citation>
    <scope>NUCLEOTIDE SEQUENCE [LARGE SCALE MRNA] (ISOFORM 2)</scope>
    <scope>NUCLEOTIDE SEQUENCE [LARGE SCALE MRNA] OF 103-671 (ISOFORM 1)</scope>
    <source>
        <tissue>Kidney</tissue>
        <tissue>Muscle</tissue>
    </source>
</reference>
<reference key="6">
    <citation type="journal article" date="2006" name="Cell">
        <title>Global, in vivo, and site-specific phosphorylation dynamics in signaling networks.</title>
        <authorList>
            <person name="Olsen J.V."/>
            <person name="Blagoev B."/>
            <person name="Gnad F."/>
            <person name="Macek B."/>
            <person name="Kumar C."/>
            <person name="Mortensen P."/>
            <person name="Mann M."/>
        </authorList>
    </citation>
    <scope>PHOSPHORYLATION [LARGE SCALE ANALYSIS] AT SER-240; SER-366; SER-369; SER-370 AND SER-625</scope>
    <scope>IDENTIFICATION BY MASS SPECTROMETRY [LARGE SCALE ANALYSIS]</scope>
    <source>
        <tissue>Cervix carcinoma</tissue>
    </source>
</reference>
<reference key="7">
    <citation type="journal article" date="2006" name="Nat. Biotechnol.">
        <title>A probability-based approach for high-throughput protein phosphorylation analysis and site localization.</title>
        <authorList>
            <person name="Beausoleil S.A."/>
            <person name="Villen J."/>
            <person name="Gerber S.A."/>
            <person name="Rush J."/>
            <person name="Gygi S.P."/>
        </authorList>
    </citation>
    <scope>PHOSPHORYLATION [LARGE SCALE ANALYSIS] AT SER-664</scope>
    <scope>IDENTIFICATION BY MASS SPECTROMETRY [LARGE SCALE ANALYSIS]</scope>
    <source>
        <tissue>Cervix carcinoma</tissue>
    </source>
</reference>
<reference key="8">
    <citation type="journal article" date="2007" name="Science">
        <title>ATM and ATR substrate analysis reveals extensive protein networks responsive to DNA damage.</title>
        <authorList>
            <person name="Matsuoka S."/>
            <person name="Ballif B.A."/>
            <person name="Smogorzewska A."/>
            <person name="McDonald E.R. III"/>
            <person name="Hurov K.E."/>
            <person name="Luo J."/>
            <person name="Bakalarski C.E."/>
            <person name="Zhao Z."/>
            <person name="Solimini N."/>
            <person name="Lerenthal Y."/>
            <person name="Shiloh Y."/>
            <person name="Gygi S.P."/>
            <person name="Elledge S.J."/>
        </authorList>
    </citation>
    <scope>IDENTIFICATION BY MASS SPECTROMETRY [LARGE SCALE ANALYSIS]</scope>
    <source>
        <tissue>Embryonic kidney</tissue>
    </source>
</reference>
<reference key="9">
    <citation type="journal article" date="2008" name="Proc. Natl. Acad. Sci. U.S.A.">
        <title>A quantitative atlas of mitotic phosphorylation.</title>
        <authorList>
            <person name="Dephoure N."/>
            <person name="Zhou C."/>
            <person name="Villen J."/>
            <person name="Beausoleil S.A."/>
            <person name="Bakalarski C.E."/>
            <person name="Elledge S.J."/>
            <person name="Gygi S.P."/>
        </authorList>
    </citation>
    <scope>PHOSPHORYLATION [LARGE SCALE ANALYSIS] AT SER-230; SER-232; SER-234; SER-240 AND SER-664</scope>
    <scope>IDENTIFICATION BY MASS SPECTROMETRY [LARGE SCALE ANALYSIS]</scope>
    <source>
        <tissue>Cervix carcinoma</tissue>
    </source>
</reference>
<reference key="10">
    <citation type="journal article" date="2010" name="Sci. Signal.">
        <title>Quantitative phosphoproteomics reveals widespread full phosphorylation site occupancy during mitosis.</title>
        <authorList>
            <person name="Olsen J.V."/>
            <person name="Vermeulen M."/>
            <person name="Santamaria A."/>
            <person name="Kumar C."/>
            <person name="Miller M.L."/>
            <person name="Jensen L.J."/>
            <person name="Gnad F."/>
            <person name="Cox J."/>
            <person name="Jensen T.S."/>
            <person name="Nigg E.A."/>
            <person name="Brunak S."/>
            <person name="Mann M."/>
        </authorList>
    </citation>
    <scope>PHOSPHORYLATION [LARGE SCALE ANALYSIS] AT SER-240; SER-490; SER-625; SER-652 AND SER-664</scope>
    <scope>IDENTIFICATION BY MASS SPECTROMETRY [LARGE SCALE ANALYSIS]</scope>
    <source>
        <tissue>Cervix carcinoma</tissue>
    </source>
</reference>
<reference key="11">
    <citation type="journal article" date="2011" name="BMC Syst. Biol.">
        <title>Initial characterization of the human central proteome.</title>
        <authorList>
            <person name="Burkard T.R."/>
            <person name="Planyavsky M."/>
            <person name="Kaupe I."/>
            <person name="Breitwieser F.P."/>
            <person name="Buerckstuemmer T."/>
            <person name="Bennett K.L."/>
            <person name="Superti-Furga G."/>
            <person name="Colinge J."/>
        </authorList>
    </citation>
    <scope>IDENTIFICATION BY MASS SPECTROMETRY [LARGE SCALE ANALYSIS]</scope>
</reference>
<reference key="12">
    <citation type="journal article" date="2011" name="Sci. Signal.">
        <title>System-wide temporal characterization of the proteome and phosphoproteome of human embryonic stem cell differentiation.</title>
        <authorList>
            <person name="Rigbolt K.T."/>
            <person name="Prokhorova T.A."/>
            <person name="Akimov V."/>
            <person name="Henningsen J."/>
            <person name="Johansen P.T."/>
            <person name="Kratchmarova I."/>
            <person name="Kassem M."/>
            <person name="Mann M."/>
            <person name="Olsen J.V."/>
            <person name="Blagoev B."/>
        </authorList>
    </citation>
    <scope>PHOSPHORYLATION [LARGE SCALE ANALYSIS] AT SER-137; SER-240; SER-395; SER-396; SER-397; SER-399; SER-454; SER-625; SER-633; SER-634; SER-652 AND SER-664</scope>
    <scope>IDENTIFICATION BY MASS SPECTROMETRY [LARGE SCALE ANALYSIS]</scope>
</reference>
<reference key="13">
    <citation type="journal article" date="2013" name="J. Proteome Res.">
        <title>Toward a comprehensive characterization of a human cancer cell phosphoproteome.</title>
        <authorList>
            <person name="Zhou H."/>
            <person name="Di Palma S."/>
            <person name="Preisinger C."/>
            <person name="Peng M."/>
            <person name="Polat A.N."/>
            <person name="Heck A.J."/>
            <person name="Mohammed S."/>
        </authorList>
    </citation>
    <scope>PHOSPHORYLATION [LARGE SCALE ANALYSIS] AT SER-165; SER-232; SER-240; SER-370; SER-454; SER-490; SER-625; SER-652 AND SER-664</scope>
    <scope>IDENTIFICATION BY MASS SPECTROMETRY [LARGE SCALE ANALYSIS]</scope>
    <source>
        <tissue>Cervix carcinoma</tissue>
        <tissue>Erythroleukemia</tissue>
    </source>
</reference>
<reference key="14">
    <citation type="journal article" date="2014" name="J. Proteomics">
        <title>An enzyme assisted RP-RPLC approach for in-depth analysis of human liver phosphoproteome.</title>
        <authorList>
            <person name="Bian Y."/>
            <person name="Song C."/>
            <person name="Cheng K."/>
            <person name="Dong M."/>
            <person name="Wang F."/>
            <person name="Huang J."/>
            <person name="Sun D."/>
            <person name="Wang L."/>
            <person name="Ye M."/>
            <person name="Zou H."/>
        </authorList>
    </citation>
    <scope>PHOSPHORYLATION [LARGE SCALE ANALYSIS] AT SER-114; SER-137; SER-240; SER-266; SER-305 AND SER-633</scope>
    <scope>IDENTIFICATION BY MASS SPECTROMETRY [LARGE SCALE ANALYSIS]</scope>
    <source>
        <tissue>Liver</tissue>
    </source>
</reference>
<reference key="15">
    <citation type="journal article" date="2015" name="Biochem. Biophys. Res. Commun.">
        <title>HDGF-related protein-2 (HRP-2) acts as an oncogene to promote cell growth in hepatocellular carcinoma.</title>
        <authorList>
            <person name="Gao K."/>
            <person name="Xu C."/>
            <person name="Jin X."/>
            <person name="Wumaier R."/>
            <person name="Ma J."/>
            <person name="Peng J."/>
            <person name="Wang Y."/>
            <person name="Tang Y."/>
            <person name="Yu L."/>
            <person name="Zhang P."/>
        </authorList>
    </citation>
    <scope>FUNCTION</scope>
    <scope>TISSUE SPECIFICITY</scope>
    <scope>INTERACTION WITH IWS1</scope>
</reference>
<reference key="16">
    <citation type="journal article" date="2016" name="Nucleic Acids Res.">
        <title>Hepatoma-derived growth factor-related protein 2 promotes DNA repair by homologous recombination.</title>
        <authorList>
            <person name="Baude A."/>
            <person name="Aaes T.L."/>
            <person name="Zhai B."/>
            <person name="Al-Nakouzi N."/>
            <person name="Oo H.Z."/>
            <person name="Daugaard M."/>
            <person name="Rohde M."/>
            <person name="Jaeaettelae M."/>
        </authorList>
    </citation>
    <scope>FUNCTION</scope>
    <scope>SUBCELLULAR LOCATION</scope>
    <scope>INTERACTION WITH HISTONE H3K9ME3; HISTONE H3K27ME2; H2AX; POGZ; RBBP8 AND CBX1</scope>
</reference>
<reference key="17">
    <citation type="journal article" date="2017" name="Nat. Struct. Mol. Biol.">
        <title>Site-specific mapping of the human SUMO proteome reveals co-modification with phosphorylation.</title>
        <authorList>
            <person name="Hendriks I.A."/>
            <person name="Lyon D."/>
            <person name="Young C."/>
            <person name="Jensen L.J."/>
            <person name="Vertegaal A.C."/>
            <person name="Nielsen M.L."/>
        </authorList>
    </citation>
    <scope>SUMOYLATION [LARGE SCALE ANALYSIS] AT LYS-554</scope>
    <scope>IDENTIFICATION BY MASS SPECTROMETRY [LARGE SCALE ANALYSIS]</scope>
</reference>
<reference key="18">
    <citation type="journal article" date="2020" name="Nucleic Acids Res.">
        <title>HRP2-DPF3a-BAF complex coordinates histone modification and chromatin remodeling to regulate myogenic gene transcription.</title>
        <authorList>
            <person name="Zhu X."/>
            <person name="Lan B."/>
            <person name="Yi X."/>
            <person name="He C."/>
            <person name="Dang L."/>
            <person name="Zhou X."/>
            <person name="Lu Y."/>
            <person name="Sun Y."/>
            <person name="Liu Z."/>
            <person name="Bai X."/>
            <person name="Zhang K."/>
            <person name="Li B."/>
            <person name="Li M.J."/>
            <person name="Chen Y."/>
            <person name="Zhang L."/>
        </authorList>
    </citation>
    <scope>FUNCTION</scope>
    <scope>INTERACTION WITH HISTONE H3K36ME2; DPF3; SMARCA4; SMARCC1 AND SMARCD1</scope>
    <scope>MUTAGENESIS OF TRP-21 AND 527-ARG--ARG-528</scope>
</reference>
<reference key="19">
    <citation type="journal article" date="2011" name="PLoS ONE">
        <title>Structural and histone binding ability characterizations of human PWWP domains.</title>
        <authorList>
            <person name="Wu H."/>
            <person name="Zeng H."/>
            <person name="Lam R."/>
            <person name="Tempel W."/>
            <person name="Amaya M.F."/>
            <person name="Xu C."/>
            <person name="Dombrovski L."/>
            <person name="Qiu W."/>
            <person name="Wang Y."/>
            <person name="Min J."/>
        </authorList>
    </citation>
    <scope>X-RAY CRYSTALLOGRAPHY (1.95 ANGSTROMS) OF 1-93 IN COMPLEX WITH HISTONE H3 PEPTIDE</scope>
    <scope>INTERACTION WITH HISTONE H3</scope>
</reference>
<gene>
    <name evidence="13" type="primary">HDGFL2</name>
    <name evidence="12" type="synonym">HDGF2</name>
    <name type="synonym">HDGFRP2</name>
    <name type="synonym">HRP2</name>
    <name type="ORF">UNQ785/PRO1604</name>
</gene>
<organism>
    <name type="scientific">Homo sapiens</name>
    <name type="common">Human</name>
    <dbReference type="NCBI Taxonomy" id="9606"/>
    <lineage>
        <taxon>Eukaryota</taxon>
        <taxon>Metazoa</taxon>
        <taxon>Chordata</taxon>
        <taxon>Craniata</taxon>
        <taxon>Vertebrata</taxon>
        <taxon>Euteleostomi</taxon>
        <taxon>Mammalia</taxon>
        <taxon>Eutheria</taxon>
        <taxon>Euarchontoglires</taxon>
        <taxon>Primates</taxon>
        <taxon>Haplorrhini</taxon>
        <taxon>Catarrhini</taxon>
        <taxon>Hominidae</taxon>
        <taxon>Homo</taxon>
    </lineage>
</organism>
<feature type="chain" id="PRO_0000317643" description="Hepatoma-derived growth factor-related protein 2">
    <location>
        <begin position="1"/>
        <end position="671"/>
    </location>
</feature>
<feature type="domain" description="PWWP" evidence="4">
    <location>
        <begin position="7"/>
        <end position="64"/>
    </location>
</feature>
<feature type="region of interest" description="Disordered" evidence="5">
    <location>
        <begin position="86"/>
        <end position="473"/>
    </location>
</feature>
<feature type="region of interest" description="Interaction with DPF3/BAF45C isoform 2" evidence="9">
    <location>
        <begin position="470"/>
        <end position="552"/>
    </location>
</feature>
<feature type="region of interest" description="Disordered" evidence="5">
    <location>
        <begin position="562"/>
        <end position="671"/>
    </location>
</feature>
<feature type="coiled-coil region" evidence="3">
    <location>
        <begin position="521"/>
        <end position="581"/>
    </location>
</feature>
<feature type="compositionally biased region" description="Low complexity" evidence="5">
    <location>
        <begin position="99"/>
        <end position="113"/>
    </location>
</feature>
<feature type="compositionally biased region" description="Low complexity" evidence="5">
    <location>
        <begin position="125"/>
        <end position="137"/>
    </location>
</feature>
<feature type="compositionally biased region" description="Basic and acidic residues" evidence="5">
    <location>
        <begin position="138"/>
        <end position="150"/>
    </location>
</feature>
<feature type="compositionally biased region" description="Basic residues" evidence="5">
    <location>
        <begin position="155"/>
        <end position="172"/>
    </location>
</feature>
<feature type="compositionally biased region" description="Basic and acidic residues" evidence="5">
    <location>
        <begin position="195"/>
        <end position="210"/>
    </location>
</feature>
<feature type="compositionally biased region" description="Basic and acidic residues" evidence="5">
    <location>
        <begin position="234"/>
        <end position="244"/>
    </location>
</feature>
<feature type="compositionally biased region" description="Low complexity" evidence="5">
    <location>
        <begin position="255"/>
        <end position="267"/>
    </location>
</feature>
<feature type="compositionally biased region" description="Basic and acidic residues" evidence="5">
    <location>
        <begin position="310"/>
        <end position="364"/>
    </location>
</feature>
<feature type="compositionally biased region" description="Basic and acidic residues" evidence="5">
    <location>
        <begin position="423"/>
        <end position="473"/>
    </location>
</feature>
<feature type="compositionally biased region" description="Basic and acidic residues" evidence="5">
    <location>
        <begin position="565"/>
        <end position="577"/>
    </location>
</feature>
<feature type="compositionally biased region" description="Basic and acidic residues" evidence="5">
    <location>
        <begin position="586"/>
        <end position="595"/>
    </location>
</feature>
<feature type="compositionally biased region" description="Basic and acidic residues" evidence="5">
    <location>
        <begin position="612"/>
        <end position="664"/>
    </location>
</feature>
<feature type="modified residue" description="Phosphoserine" evidence="20">
    <location>
        <position position="114"/>
    </location>
</feature>
<feature type="modified residue" description="Phosphoserine" evidence="18 20">
    <location>
        <position position="137"/>
    </location>
</feature>
<feature type="modified residue" description="Phosphoserine" evidence="19">
    <location>
        <position position="165"/>
    </location>
</feature>
<feature type="modified residue" description="Phosphoserine" evidence="16">
    <location>
        <position position="230"/>
    </location>
</feature>
<feature type="modified residue" description="Phosphoserine" evidence="16 19">
    <location>
        <position position="232"/>
    </location>
</feature>
<feature type="modified residue" description="Phosphoserine" evidence="16">
    <location>
        <position position="234"/>
    </location>
</feature>
<feature type="modified residue" description="Phosphoserine" evidence="15 16 17 18 19 20">
    <location>
        <position position="240"/>
    </location>
</feature>
<feature type="modified residue" description="Phosphoserine" evidence="20">
    <location>
        <position position="266"/>
    </location>
</feature>
<feature type="modified residue" description="Phosphoserine" evidence="20">
    <location>
        <position position="305"/>
    </location>
</feature>
<feature type="modified residue" description="Phosphoserine" evidence="15">
    <location>
        <position position="366"/>
    </location>
</feature>
<feature type="modified residue" description="Phosphoserine" evidence="15">
    <location>
        <position position="369"/>
    </location>
</feature>
<feature type="modified residue" description="Phosphoserine" evidence="15 19">
    <location>
        <position position="370"/>
    </location>
</feature>
<feature type="modified residue" description="Phosphoserine" evidence="18">
    <location>
        <position position="395"/>
    </location>
</feature>
<feature type="modified residue" description="Phosphoserine" evidence="18">
    <location>
        <position position="396"/>
    </location>
</feature>
<feature type="modified residue" description="Phosphoserine" evidence="18">
    <location>
        <position position="397"/>
    </location>
</feature>
<feature type="modified residue" description="Phosphoserine" evidence="18">
    <location>
        <position position="399"/>
    </location>
</feature>
<feature type="modified residue" description="Phosphoserine" evidence="18 19">
    <location>
        <position position="454"/>
    </location>
</feature>
<feature type="modified residue" description="Phosphoserine" evidence="2">
    <location>
        <position position="458"/>
    </location>
</feature>
<feature type="modified residue" description="Phosphoserine" evidence="17 19">
    <location>
        <position position="490"/>
    </location>
</feature>
<feature type="modified residue" description="Phosphoserine" evidence="15 17 18 19">
    <location>
        <position position="625"/>
    </location>
</feature>
<feature type="modified residue" description="Phosphoserine" evidence="18 20">
    <location>
        <position position="633"/>
    </location>
</feature>
<feature type="modified residue" description="Phosphoserine" evidence="18">
    <location>
        <position position="634"/>
    </location>
</feature>
<feature type="modified residue" description="Phosphoserine" evidence="1">
    <location>
        <position position="640"/>
    </location>
</feature>
<feature type="modified residue" description="Phosphoserine" evidence="17 18 19">
    <location>
        <position position="652"/>
    </location>
</feature>
<feature type="modified residue" description="Phosphoserine" evidence="14 16 17 18 19">
    <location>
        <position position="664"/>
    </location>
</feature>
<feature type="cross-link" description="Glycyl lysine isopeptide (Lys-Gly) (interchain with G-Cter in SUMO2)" evidence="21">
    <location>
        <position position="554"/>
    </location>
</feature>
<feature type="splice variant" id="VSP_047329" description="In isoform 3 and isoform 4." evidence="11">
    <original>K</original>
    <variation>KLAGEE</variation>
    <location>
        <position position="574"/>
    </location>
</feature>
<feature type="splice variant" id="VSP_031116" description="In isoform 2 and isoform 4." evidence="10">
    <location>
        <position position="640"/>
    </location>
</feature>
<feature type="mutagenesis site" description="Loss of interaction with histone H3K36me2." evidence="9">
    <original>W</original>
    <variation>A</variation>
    <location>
        <position position="21"/>
    </location>
</feature>
<feature type="mutagenesis site" description="Loss of interaction with SMARCA4, SMARCC1, SMARCD1 and DPF3/BAF45C isoform 2." evidence="9">
    <original>RR</original>
    <variation>AA</variation>
    <variation>DD</variation>
    <location>
        <begin position="527"/>
        <end position="528"/>
    </location>
</feature>
<feature type="strand" evidence="23">
    <location>
        <begin position="10"/>
        <end position="13"/>
    </location>
</feature>
<feature type="strand" evidence="23">
    <location>
        <begin position="21"/>
        <end position="25"/>
    </location>
</feature>
<feature type="turn" evidence="22">
    <location>
        <begin position="28"/>
        <end position="30"/>
    </location>
</feature>
<feature type="strand" evidence="23">
    <location>
        <begin position="40"/>
        <end position="44"/>
    </location>
</feature>
<feature type="turn" evidence="23">
    <location>
        <begin position="45"/>
        <end position="47"/>
    </location>
</feature>
<feature type="strand" evidence="23">
    <location>
        <begin position="50"/>
        <end position="53"/>
    </location>
</feature>
<feature type="helix" evidence="23">
    <location>
        <begin position="55"/>
        <end position="57"/>
    </location>
</feature>
<feature type="strand" evidence="23">
    <location>
        <begin position="58"/>
        <end position="60"/>
    </location>
</feature>
<feature type="helix" evidence="23">
    <location>
        <begin position="61"/>
        <end position="68"/>
    </location>
</feature>
<feature type="helix" evidence="23">
    <location>
        <begin position="77"/>
        <end position="86"/>
    </location>
</feature>
<feature type="helix" evidence="24">
    <location>
        <begin position="471"/>
        <end position="485"/>
    </location>
</feature>
<feature type="strand" evidence="24">
    <location>
        <begin position="488"/>
        <end position="490"/>
    </location>
</feature>
<feature type="helix" evidence="24">
    <location>
        <begin position="493"/>
        <end position="503"/>
    </location>
</feature>
<feature type="helix" evidence="24">
    <location>
        <begin position="510"/>
        <end position="513"/>
    </location>
</feature>
<feature type="helix" evidence="24">
    <location>
        <begin position="514"/>
        <end position="516"/>
    </location>
</feature>
<feature type="helix" evidence="24">
    <location>
        <begin position="517"/>
        <end position="526"/>
    </location>
</feature>
<feature type="helix" evidence="24">
    <location>
        <begin position="533"/>
        <end position="547"/>
    </location>
</feature>
<dbReference type="EMBL" id="AF294267">
    <property type="protein sequence ID" value="AAP97281.1"/>
    <property type="molecule type" value="mRNA"/>
</dbReference>
<dbReference type="EMBL" id="AY358600">
    <property type="protein sequence ID" value="AAQ88963.1"/>
    <property type="molecule type" value="mRNA"/>
</dbReference>
<dbReference type="EMBL" id="AC011498">
    <property type="status" value="NOT_ANNOTATED_CDS"/>
    <property type="molecule type" value="Genomic_DNA"/>
</dbReference>
<dbReference type="EMBL" id="CH471139">
    <property type="protein sequence ID" value="EAW69215.1"/>
    <property type="molecule type" value="Genomic_DNA"/>
</dbReference>
<dbReference type="EMBL" id="CH471139">
    <property type="protein sequence ID" value="EAW69216.1"/>
    <property type="molecule type" value="Genomic_DNA"/>
</dbReference>
<dbReference type="EMBL" id="BC000755">
    <property type="protein sequence ID" value="AAH00755.1"/>
    <property type="molecule type" value="mRNA"/>
</dbReference>
<dbReference type="EMBL" id="BC009449">
    <property type="protein sequence ID" value="AAH09449.1"/>
    <property type="molecule type" value="mRNA"/>
</dbReference>
<dbReference type="CCDS" id="CCDS42472.1">
    <molecule id="Q7Z4V5-1"/>
</dbReference>
<dbReference type="CCDS" id="CCDS59336.1">
    <molecule id="Q7Z4V5-2"/>
</dbReference>
<dbReference type="RefSeq" id="NP_001001520.1">
    <molecule id="Q7Z4V5-1"/>
    <property type="nucleotide sequence ID" value="NM_001001520.3"/>
</dbReference>
<dbReference type="RefSeq" id="NP_116020.1">
    <molecule id="Q7Z4V5-2"/>
    <property type="nucleotide sequence ID" value="NM_032631.4"/>
</dbReference>
<dbReference type="PDB" id="3EAE">
    <property type="method" value="X-ray"/>
    <property type="resolution" value="2.24 A"/>
    <property type="chains" value="A/B=1-93"/>
</dbReference>
<dbReference type="PDB" id="3QBY">
    <property type="method" value="X-ray"/>
    <property type="resolution" value="1.95 A"/>
    <property type="chains" value="A/B/C=1-93"/>
</dbReference>
<dbReference type="PDB" id="3QJ6">
    <property type="method" value="X-ray"/>
    <property type="resolution" value="2.30 A"/>
    <property type="chains" value="A=1-93"/>
</dbReference>
<dbReference type="PDB" id="6T3I">
    <property type="method" value="NMR"/>
    <property type="chains" value="A=469-549"/>
</dbReference>
<dbReference type="PDB" id="7HG0">
    <property type="method" value="X-ray"/>
    <property type="resolution" value="1.58 A"/>
    <property type="chains" value="A/B/C=1-93"/>
</dbReference>
<dbReference type="PDB" id="7HG1">
    <property type="method" value="X-ray"/>
    <property type="resolution" value="1.81 A"/>
    <property type="chains" value="A/B/C=1-93"/>
</dbReference>
<dbReference type="PDB" id="7HG2">
    <property type="method" value="X-ray"/>
    <property type="resolution" value="1.70 A"/>
    <property type="chains" value="A/B/C=1-93"/>
</dbReference>
<dbReference type="PDB" id="7HG3">
    <property type="method" value="X-ray"/>
    <property type="resolution" value="1.45 A"/>
    <property type="chains" value="A/B/C=1-93"/>
</dbReference>
<dbReference type="PDB" id="7HG4">
    <property type="method" value="X-ray"/>
    <property type="resolution" value="1.57 A"/>
    <property type="chains" value="A/B/C=1-93"/>
</dbReference>
<dbReference type="PDB" id="7HG5">
    <property type="method" value="X-ray"/>
    <property type="resolution" value="1.57 A"/>
    <property type="chains" value="A/B/C=1-93"/>
</dbReference>
<dbReference type="PDB" id="7HG6">
    <property type="method" value="X-ray"/>
    <property type="resolution" value="1.52 A"/>
    <property type="chains" value="A/B/C=1-93"/>
</dbReference>
<dbReference type="PDB" id="7HG7">
    <property type="method" value="X-ray"/>
    <property type="resolution" value="1.76 A"/>
    <property type="chains" value="A/B/C=1-93"/>
</dbReference>
<dbReference type="PDB" id="7HG8">
    <property type="method" value="X-ray"/>
    <property type="resolution" value="1.67 A"/>
    <property type="chains" value="A/B/C=1-93"/>
</dbReference>
<dbReference type="PDB" id="7HG9">
    <property type="method" value="X-ray"/>
    <property type="resolution" value="1.58 A"/>
    <property type="chains" value="A/B/C=1-93"/>
</dbReference>
<dbReference type="PDB" id="7HGA">
    <property type="method" value="X-ray"/>
    <property type="resolution" value="1.57 A"/>
    <property type="chains" value="A/B/C=1-93"/>
</dbReference>
<dbReference type="PDB" id="7HGB">
    <property type="method" value="X-ray"/>
    <property type="resolution" value="1.52 A"/>
    <property type="chains" value="A/B/C=1-93"/>
</dbReference>
<dbReference type="PDB" id="7HGC">
    <property type="method" value="X-ray"/>
    <property type="resolution" value="1.51 A"/>
    <property type="chains" value="A/B/C=1-93"/>
</dbReference>
<dbReference type="PDB" id="7HGD">
    <property type="method" value="X-ray"/>
    <property type="resolution" value="1.65 A"/>
    <property type="chains" value="A/B/C=1-93"/>
</dbReference>
<dbReference type="PDB" id="7HGE">
    <property type="method" value="X-ray"/>
    <property type="resolution" value="1.77 A"/>
    <property type="chains" value="A/B/C=1-93"/>
</dbReference>
<dbReference type="PDB" id="7HGF">
    <property type="method" value="X-ray"/>
    <property type="resolution" value="1.55 A"/>
    <property type="chains" value="A/B/C=1-93"/>
</dbReference>
<dbReference type="PDB" id="7HGG">
    <property type="method" value="X-ray"/>
    <property type="resolution" value="1.61 A"/>
    <property type="chains" value="A/B/C=1-93"/>
</dbReference>
<dbReference type="PDB" id="7HGH">
    <property type="method" value="X-ray"/>
    <property type="resolution" value="1.74 A"/>
    <property type="chains" value="A/B/C=1-93"/>
</dbReference>
<dbReference type="PDB" id="7HGI">
    <property type="method" value="X-ray"/>
    <property type="resolution" value="1.71 A"/>
    <property type="chains" value="A/B/C=1-93"/>
</dbReference>
<dbReference type="PDB" id="7HGJ">
    <property type="method" value="X-ray"/>
    <property type="resolution" value="1.75 A"/>
    <property type="chains" value="A/B/C=1-93"/>
</dbReference>
<dbReference type="PDB" id="7HGK">
    <property type="method" value="X-ray"/>
    <property type="resolution" value="1.59 A"/>
    <property type="chains" value="A/B/C=1-93"/>
</dbReference>
<dbReference type="PDB" id="7HGL">
    <property type="method" value="X-ray"/>
    <property type="resolution" value="1.73 A"/>
    <property type="chains" value="A/B/C=1-93"/>
</dbReference>
<dbReference type="PDB" id="7HGM">
    <property type="method" value="X-ray"/>
    <property type="resolution" value="1.61 A"/>
    <property type="chains" value="A/B/C=1-93"/>
</dbReference>
<dbReference type="PDB" id="7HGN">
    <property type="method" value="X-ray"/>
    <property type="resolution" value="1.55 A"/>
    <property type="chains" value="A/B/C=1-93"/>
</dbReference>
<dbReference type="PDB" id="7HGO">
    <property type="method" value="X-ray"/>
    <property type="resolution" value="1.44 A"/>
    <property type="chains" value="A/B/C=1-93"/>
</dbReference>
<dbReference type="PDB" id="7HGP">
    <property type="method" value="X-ray"/>
    <property type="resolution" value="1.62 A"/>
    <property type="chains" value="A/B/C=1-93"/>
</dbReference>
<dbReference type="PDB" id="7HGQ">
    <property type="method" value="X-ray"/>
    <property type="resolution" value="1.76 A"/>
    <property type="chains" value="A/B/C=1-93"/>
</dbReference>
<dbReference type="PDB" id="7HGR">
    <property type="method" value="X-ray"/>
    <property type="resolution" value="1.41 A"/>
    <property type="chains" value="A/B/C=1-93"/>
</dbReference>
<dbReference type="PDB" id="7HGS">
    <property type="method" value="X-ray"/>
    <property type="resolution" value="1.51 A"/>
    <property type="chains" value="A/B/C=1-93"/>
</dbReference>
<dbReference type="PDB" id="7HGT">
    <property type="method" value="X-ray"/>
    <property type="resolution" value="1.57 A"/>
    <property type="chains" value="A/B/C=1-93"/>
</dbReference>
<dbReference type="PDB" id="7HGU">
    <property type="method" value="X-ray"/>
    <property type="resolution" value="1.67 A"/>
    <property type="chains" value="A/B/C=1-93"/>
</dbReference>
<dbReference type="PDB" id="7HGV">
    <property type="method" value="X-ray"/>
    <property type="resolution" value="1.48 A"/>
    <property type="chains" value="A/B/C=1-93"/>
</dbReference>
<dbReference type="PDB" id="7HGW">
    <property type="method" value="X-ray"/>
    <property type="resolution" value="1.59 A"/>
    <property type="chains" value="A/B/C=1-93"/>
</dbReference>
<dbReference type="PDB" id="7HGX">
    <property type="method" value="X-ray"/>
    <property type="resolution" value="1.57 A"/>
    <property type="chains" value="A/B/C=1-93"/>
</dbReference>
<dbReference type="PDB" id="7HGY">
    <property type="method" value="X-ray"/>
    <property type="resolution" value="1.61 A"/>
    <property type="chains" value="A/B/C=1-93"/>
</dbReference>
<dbReference type="PDB" id="7HGZ">
    <property type="method" value="X-ray"/>
    <property type="resolution" value="1.65 A"/>
    <property type="chains" value="A/B/C=1-93"/>
</dbReference>
<dbReference type="PDB" id="7HH0">
    <property type="method" value="X-ray"/>
    <property type="resolution" value="1.60 A"/>
    <property type="chains" value="A/B/C=1-93"/>
</dbReference>
<dbReference type="PDB" id="7HH1">
    <property type="method" value="X-ray"/>
    <property type="resolution" value="1.53 A"/>
    <property type="chains" value="A/B/C=1-93"/>
</dbReference>
<dbReference type="PDB" id="7HH2">
    <property type="method" value="X-ray"/>
    <property type="resolution" value="1.78 A"/>
    <property type="chains" value="A/B/C=1-93"/>
</dbReference>
<dbReference type="PDB" id="7HH3">
    <property type="method" value="X-ray"/>
    <property type="resolution" value="1.64 A"/>
    <property type="chains" value="A/B/C=1-93"/>
</dbReference>
<dbReference type="PDB" id="7HH4">
    <property type="method" value="X-ray"/>
    <property type="resolution" value="1.49 A"/>
    <property type="chains" value="A/B/C=1-93"/>
</dbReference>
<dbReference type="PDB" id="7HH5">
    <property type="method" value="X-ray"/>
    <property type="resolution" value="1.66 A"/>
    <property type="chains" value="A/B/C=1-93"/>
</dbReference>
<dbReference type="PDB" id="7HH6">
    <property type="method" value="X-ray"/>
    <property type="resolution" value="1.71 A"/>
    <property type="chains" value="A/B/C=1-93"/>
</dbReference>
<dbReference type="PDB" id="7HH7">
    <property type="method" value="X-ray"/>
    <property type="resolution" value="1.73 A"/>
    <property type="chains" value="A/B/C=1-93"/>
</dbReference>
<dbReference type="PDB" id="7HH8">
    <property type="method" value="X-ray"/>
    <property type="resolution" value="1.81 A"/>
    <property type="chains" value="A/B/C=1-93"/>
</dbReference>
<dbReference type="PDB" id="7HH9">
    <property type="method" value="X-ray"/>
    <property type="resolution" value="1.54 A"/>
    <property type="chains" value="A/B/C=1-93"/>
</dbReference>
<dbReference type="PDB" id="7HHA">
    <property type="method" value="X-ray"/>
    <property type="resolution" value="1.80 A"/>
    <property type="chains" value="A/B/C=1-93"/>
</dbReference>
<dbReference type="PDB" id="7HHB">
    <property type="method" value="X-ray"/>
    <property type="resolution" value="1.78 A"/>
    <property type="chains" value="A/B/C=1-93"/>
</dbReference>
<dbReference type="PDB" id="7HHC">
    <property type="method" value="X-ray"/>
    <property type="resolution" value="1.59 A"/>
    <property type="chains" value="A/B/C=1-93"/>
</dbReference>
<dbReference type="PDB" id="7HHD">
    <property type="method" value="X-ray"/>
    <property type="resolution" value="1.57 A"/>
    <property type="chains" value="A/B/C=1-93"/>
</dbReference>
<dbReference type="PDB" id="7HHE">
    <property type="method" value="X-ray"/>
    <property type="resolution" value="2.04 A"/>
    <property type="chains" value="A/B/C=1-93"/>
</dbReference>
<dbReference type="PDB" id="7HHF">
    <property type="method" value="X-ray"/>
    <property type="resolution" value="1.86 A"/>
    <property type="chains" value="A/B/C=1-93"/>
</dbReference>
<dbReference type="PDB" id="7HHG">
    <property type="method" value="X-ray"/>
    <property type="resolution" value="1.50 A"/>
    <property type="chains" value="A/B/C=1-93"/>
</dbReference>
<dbReference type="PDB" id="7HHH">
    <property type="method" value="X-ray"/>
    <property type="resolution" value="1.69 A"/>
    <property type="chains" value="A/B/C=1-93"/>
</dbReference>
<dbReference type="PDB" id="7HHI">
    <property type="method" value="X-ray"/>
    <property type="resolution" value="2.11 A"/>
    <property type="chains" value="A/B/C=1-93"/>
</dbReference>
<dbReference type="PDB" id="7HHJ">
    <property type="method" value="X-ray"/>
    <property type="resolution" value="1.78 A"/>
    <property type="chains" value="A/B/C=1-93"/>
</dbReference>
<dbReference type="PDB" id="7HHK">
    <property type="method" value="X-ray"/>
    <property type="resolution" value="1.94 A"/>
    <property type="chains" value="A/B/C=1-93"/>
</dbReference>
<dbReference type="PDB" id="7HHL">
    <property type="method" value="X-ray"/>
    <property type="resolution" value="1.71 A"/>
    <property type="chains" value="A/B/C=1-93"/>
</dbReference>
<dbReference type="PDB" id="7HHM">
    <property type="method" value="X-ray"/>
    <property type="resolution" value="1.78 A"/>
    <property type="chains" value="A/B/C=1-93"/>
</dbReference>
<dbReference type="PDB" id="7HHN">
    <property type="method" value="X-ray"/>
    <property type="resolution" value="1.77 A"/>
    <property type="chains" value="A/B/C=1-93"/>
</dbReference>
<dbReference type="PDB" id="7HHO">
    <property type="method" value="X-ray"/>
    <property type="resolution" value="1.76 A"/>
    <property type="chains" value="A/B/C=1-93"/>
</dbReference>
<dbReference type="PDB" id="7HHP">
    <property type="method" value="X-ray"/>
    <property type="resolution" value="1.78 A"/>
    <property type="chains" value="A/B/C=1-93"/>
</dbReference>
<dbReference type="PDB" id="7HHQ">
    <property type="method" value="X-ray"/>
    <property type="resolution" value="1.60 A"/>
    <property type="chains" value="A/B/C=1-93"/>
</dbReference>
<dbReference type="PDB" id="7HHR">
    <property type="method" value="X-ray"/>
    <property type="resolution" value="2.03 A"/>
    <property type="chains" value="A/B/C=1-93"/>
</dbReference>
<dbReference type="PDB" id="9G91">
    <property type="method" value="X-ray"/>
    <property type="resolution" value="1.78 A"/>
    <property type="chains" value="A/B=1-93"/>
</dbReference>
<dbReference type="PDB" id="9G94">
    <property type="method" value="X-ray"/>
    <property type="resolution" value="1.73 A"/>
    <property type="chains" value="A/B/C=1-93"/>
</dbReference>
<dbReference type="PDB" id="9G96">
    <property type="method" value="X-ray"/>
    <property type="resolution" value="1.94 A"/>
    <property type="chains" value="A/B=1-93"/>
</dbReference>
<dbReference type="PDB" id="9GRS">
    <property type="method" value="X-ray"/>
    <property type="resolution" value="1.66 A"/>
    <property type="chains" value="A/B/C=1-93"/>
</dbReference>
<dbReference type="PDB" id="9GRT">
    <property type="method" value="X-ray"/>
    <property type="resolution" value="1.64 A"/>
    <property type="chains" value="A/B/C=1-93"/>
</dbReference>
<dbReference type="PDB" id="9GRU">
    <property type="method" value="X-ray"/>
    <property type="resolution" value="1.70 A"/>
    <property type="chains" value="A/B/C=1-93"/>
</dbReference>
<dbReference type="PDB" id="9GRV">
    <property type="method" value="X-ray"/>
    <property type="resolution" value="1.55 A"/>
    <property type="chains" value="A/B/C=1-93"/>
</dbReference>
<dbReference type="PDBsum" id="3EAE"/>
<dbReference type="PDBsum" id="3QBY"/>
<dbReference type="PDBsum" id="3QJ6"/>
<dbReference type="PDBsum" id="6T3I"/>
<dbReference type="PDBsum" id="7HG0"/>
<dbReference type="PDBsum" id="7HG1"/>
<dbReference type="PDBsum" id="7HG2"/>
<dbReference type="PDBsum" id="7HG3"/>
<dbReference type="PDBsum" id="7HG4"/>
<dbReference type="PDBsum" id="7HG5"/>
<dbReference type="PDBsum" id="7HG6"/>
<dbReference type="PDBsum" id="7HG7"/>
<dbReference type="PDBsum" id="7HG8"/>
<dbReference type="PDBsum" id="7HG9"/>
<dbReference type="PDBsum" id="7HGA"/>
<dbReference type="PDBsum" id="7HGB"/>
<dbReference type="PDBsum" id="7HGC"/>
<dbReference type="PDBsum" id="7HGD"/>
<dbReference type="PDBsum" id="7HGE"/>
<dbReference type="PDBsum" id="7HGF"/>
<dbReference type="PDBsum" id="7HGG"/>
<dbReference type="PDBsum" id="7HGH"/>
<dbReference type="PDBsum" id="7HGI"/>
<dbReference type="PDBsum" id="7HGJ"/>
<dbReference type="PDBsum" id="7HGK"/>
<dbReference type="PDBsum" id="7HGL"/>
<dbReference type="PDBsum" id="7HGM"/>
<dbReference type="PDBsum" id="7HGN"/>
<dbReference type="PDBsum" id="7HGO"/>
<dbReference type="PDBsum" id="7HGP"/>
<dbReference type="PDBsum" id="7HGQ"/>
<dbReference type="PDBsum" id="7HGR"/>
<dbReference type="PDBsum" id="7HGS"/>
<dbReference type="PDBsum" id="7HGT"/>
<dbReference type="PDBsum" id="7HGU"/>
<dbReference type="PDBsum" id="7HGV"/>
<dbReference type="PDBsum" id="7HGW"/>
<dbReference type="PDBsum" id="7HGX"/>
<dbReference type="PDBsum" id="7HGY"/>
<dbReference type="PDBsum" id="7HGZ"/>
<dbReference type="PDBsum" id="7HH0"/>
<dbReference type="PDBsum" id="7HH1"/>
<dbReference type="PDBsum" id="7HH2"/>
<dbReference type="PDBsum" id="7HH3"/>
<dbReference type="PDBsum" id="7HH4"/>
<dbReference type="PDBsum" id="7HH5"/>
<dbReference type="PDBsum" id="7HH6"/>
<dbReference type="PDBsum" id="7HH7"/>
<dbReference type="PDBsum" id="7HH8"/>
<dbReference type="PDBsum" id="7HH9"/>
<dbReference type="PDBsum" id="7HHA"/>
<dbReference type="PDBsum" id="7HHB"/>
<dbReference type="PDBsum" id="7HHC"/>
<dbReference type="PDBsum" id="7HHD"/>
<dbReference type="PDBsum" id="7HHE"/>
<dbReference type="PDBsum" id="7HHF"/>
<dbReference type="PDBsum" id="7HHG"/>
<dbReference type="PDBsum" id="7HHH"/>
<dbReference type="PDBsum" id="7HHI"/>
<dbReference type="PDBsum" id="7HHJ"/>
<dbReference type="PDBsum" id="7HHK"/>
<dbReference type="PDBsum" id="7HHL"/>
<dbReference type="PDBsum" id="7HHM"/>
<dbReference type="PDBsum" id="7HHN"/>
<dbReference type="PDBsum" id="7HHO"/>
<dbReference type="PDBsum" id="7HHP"/>
<dbReference type="PDBsum" id="7HHQ"/>
<dbReference type="PDBsum" id="7HHR"/>
<dbReference type="PDBsum" id="9G91"/>
<dbReference type="PDBsum" id="9G94"/>
<dbReference type="PDBsum" id="9G96"/>
<dbReference type="PDBsum" id="9GRS"/>
<dbReference type="PDBsum" id="9GRT"/>
<dbReference type="PDBsum" id="9GRU"/>
<dbReference type="PDBsum" id="9GRV"/>
<dbReference type="SMR" id="Q7Z4V5"/>
<dbReference type="BioGRID" id="124221">
    <property type="interactions" value="241"/>
</dbReference>
<dbReference type="FunCoup" id="Q7Z4V5">
    <property type="interactions" value="2248"/>
</dbReference>
<dbReference type="IntAct" id="Q7Z4V5">
    <property type="interactions" value="119"/>
</dbReference>
<dbReference type="MINT" id="Q7Z4V5"/>
<dbReference type="STRING" id="9606.ENSP00000483345"/>
<dbReference type="ChEMBL" id="CHEMBL4523364"/>
<dbReference type="GlyCosmos" id="Q7Z4V5">
    <property type="glycosylation" value="1 site, 1 glycan"/>
</dbReference>
<dbReference type="GlyGen" id="Q7Z4V5">
    <property type="glycosylation" value="1 site, 1 O-linked glycan (1 site)"/>
</dbReference>
<dbReference type="iPTMnet" id="Q7Z4V5"/>
<dbReference type="PhosphoSitePlus" id="Q7Z4V5"/>
<dbReference type="SwissPalm" id="Q7Z4V5"/>
<dbReference type="BioMuta" id="HDGFL2"/>
<dbReference type="DMDM" id="74738715"/>
<dbReference type="jPOST" id="Q7Z4V5"/>
<dbReference type="MassIVE" id="Q7Z4V5"/>
<dbReference type="PaxDb" id="9606-ENSP00000483345"/>
<dbReference type="PeptideAtlas" id="Q7Z4V5"/>
<dbReference type="ProteomicsDB" id="46298"/>
<dbReference type="ProteomicsDB" id="69248">
    <molecule id="Q7Z4V5-1"/>
</dbReference>
<dbReference type="ProteomicsDB" id="69249">
    <molecule id="Q7Z4V5-2"/>
</dbReference>
<dbReference type="Pumba" id="Q7Z4V5"/>
<dbReference type="ABCD" id="Q7Z4V5">
    <property type="antibodies" value="1 sequenced antibody"/>
</dbReference>
<dbReference type="Antibodypedia" id="42428">
    <property type="antibodies" value="148 antibodies from 29 providers"/>
</dbReference>
<dbReference type="DNASU" id="84717"/>
<dbReference type="Ensembl" id="ENST00000616600.5">
    <molecule id="Q7Z4V5-1"/>
    <property type="protein sequence ID" value="ENSP00000483345.1"/>
    <property type="gene ID" value="ENSG00000167674.15"/>
</dbReference>
<dbReference type="Ensembl" id="ENST00000621835.4">
    <molecule id="Q7Z4V5-2"/>
    <property type="protein sequence ID" value="ENSP00000483702.1"/>
    <property type="gene ID" value="ENSG00000167674.15"/>
</dbReference>
<dbReference type="GeneID" id="84717"/>
<dbReference type="KEGG" id="hsa:84717"/>
<dbReference type="MANE-Select" id="ENST00000616600.5">
    <property type="protein sequence ID" value="ENSP00000483345.1"/>
    <property type="RefSeq nucleotide sequence ID" value="NM_001001520.3"/>
    <property type="RefSeq protein sequence ID" value="NP_001001520.1"/>
</dbReference>
<dbReference type="UCSC" id="uc032hkd.2">
    <molecule id="Q7Z4V5-1"/>
    <property type="organism name" value="human"/>
</dbReference>
<dbReference type="AGR" id="HGNC:14680"/>
<dbReference type="CTD" id="84717"/>
<dbReference type="DisGeNET" id="84717"/>
<dbReference type="GeneCards" id="HDGFL2"/>
<dbReference type="HGNC" id="HGNC:14680">
    <property type="gene designation" value="HDGFL2"/>
</dbReference>
<dbReference type="HPA" id="ENSG00000167674">
    <property type="expression patterns" value="Low tissue specificity"/>
</dbReference>
<dbReference type="MIM" id="617884">
    <property type="type" value="gene"/>
</dbReference>
<dbReference type="neXtProt" id="NX_Q7Z4V5"/>
<dbReference type="VEuPathDB" id="HostDB:ENSG00000167674"/>
<dbReference type="eggNOG" id="KOG1904">
    <property type="taxonomic scope" value="Eukaryota"/>
</dbReference>
<dbReference type="GeneTree" id="ENSGT00940000153942"/>
<dbReference type="InParanoid" id="Q7Z4V5"/>
<dbReference type="OMA" id="HINATQD"/>
<dbReference type="OrthoDB" id="62853at2759"/>
<dbReference type="PAN-GO" id="Q7Z4V5">
    <property type="GO annotations" value="4 GO annotations based on evolutionary models"/>
</dbReference>
<dbReference type="PhylomeDB" id="Q7Z4V5"/>
<dbReference type="TreeFam" id="TF105385"/>
<dbReference type="PathwayCommons" id="Q7Z4V5"/>
<dbReference type="SignaLink" id="Q7Z4V5"/>
<dbReference type="BioGRID-ORCS" id="84717">
    <property type="hits" value="36 hits in 1122 CRISPR screens"/>
</dbReference>
<dbReference type="ChiTaRS" id="HDGFRP2">
    <property type="organism name" value="human"/>
</dbReference>
<dbReference type="EvolutionaryTrace" id="Q7Z4V5"/>
<dbReference type="GenomeRNAi" id="84717"/>
<dbReference type="Pharos" id="Q7Z4V5">
    <property type="development level" value="Tbio"/>
</dbReference>
<dbReference type="PRO" id="PR:Q7Z4V5"/>
<dbReference type="Proteomes" id="UP000005640">
    <property type="component" value="Chromosome 19"/>
</dbReference>
<dbReference type="RNAct" id="Q7Z4V5">
    <property type="molecule type" value="protein"/>
</dbReference>
<dbReference type="Bgee" id="ENSG00000167674">
    <property type="expression patterns" value="Expressed in ventricular zone and 174 other cell types or tissues"/>
</dbReference>
<dbReference type="ExpressionAtlas" id="Q7Z4V5">
    <property type="expression patterns" value="baseline and differential"/>
</dbReference>
<dbReference type="GO" id="GO:0005737">
    <property type="term" value="C:cytoplasm"/>
    <property type="evidence" value="ECO:0000250"/>
    <property type="project" value="UniProtKB"/>
</dbReference>
<dbReference type="GO" id="GO:0005634">
    <property type="term" value="C:nucleus"/>
    <property type="evidence" value="ECO:0000314"/>
    <property type="project" value="UniProtKB"/>
</dbReference>
<dbReference type="GO" id="GO:0061628">
    <property type="term" value="F:histone H3K27me3 reader activity"/>
    <property type="evidence" value="ECO:0000314"/>
    <property type="project" value="UniProtKB"/>
</dbReference>
<dbReference type="GO" id="GO:0062072">
    <property type="term" value="F:histone H3K9me2/3 reader activity"/>
    <property type="evidence" value="ECO:0000314"/>
    <property type="project" value="UniProtKB"/>
</dbReference>
<dbReference type="GO" id="GO:0140566">
    <property type="term" value="F:histone reader activity"/>
    <property type="evidence" value="ECO:0000314"/>
    <property type="project" value="GO_Central"/>
</dbReference>
<dbReference type="GO" id="GO:0006338">
    <property type="term" value="P:chromatin remodeling"/>
    <property type="evidence" value="ECO:0000318"/>
    <property type="project" value="GO_Central"/>
</dbReference>
<dbReference type="GO" id="GO:0006310">
    <property type="term" value="P:DNA recombination"/>
    <property type="evidence" value="ECO:0007669"/>
    <property type="project" value="UniProtKB-KW"/>
</dbReference>
<dbReference type="GO" id="GO:0006281">
    <property type="term" value="P:DNA repair"/>
    <property type="evidence" value="ECO:0007669"/>
    <property type="project" value="UniProtKB-KW"/>
</dbReference>
<dbReference type="GO" id="GO:0140861">
    <property type="term" value="P:DNA repair-dependent chromatin remodeling"/>
    <property type="evidence" value="ECO:0000315"/>
    <property type="project" value="GO_Central"/>
</dbReference>
<dbReference type="GO" id="GO:0042692">
    <property type="term" value="P:muscle cell differentiation"/>
    <property type="evidence" value="ECO:0000315"/>
    <property type="project" value="UniProtKB"/>
</dbReference>
<dbReference type="GO" id="GO:0007517">
    <property type="term" value="P:muscle organ development"/>
    <property type="evidence" value="ECO:0007669"/>
    <property type="project" value="UniProtKB-KW"/>
</dbReference>
<dbReference type="GO" id="GO:0030307">
    <property type="term" value="P:positive regulation of cell growth"/>
    <property type="evidence" value="ECO:0000315"/>
    <property type="project" value="UniProtKB"/>
</dbReference>
<dbReference type="GO" id="GO:1905168">
    <property type="term" value="P:positive regulation of double-strand break repair via homologous recombination"/>
    <property type="evidence" value="ECO:0000315"/>
    <property type="project" value="UniProtKB"/>
</dbReference>
<dbReference type="GO" id="GO:0043403">
    <property type="term" value="P:skeletal muscle tissue regeneration"/>
    <property type="evidence" value="ECO:0000250"/>
    <property type="project" value="UniProtKB"/>
</dbReference>
<dbReference type="CDD" id="cd20149">
    <property type="entry name" value="PWWP_HDGFL2"/>
    <property type="match status" value="1"/>
</dbReference>
<dbReference type="FunFam" id="2.30.30.140:FF:000017">
    <property type="entry name" value="hepatoma-derived growth factor isoform X1"/>
    <property type="match status" value="1"/>
</dbReference>
<dbReference type="FunFam" id="1.20.930.10:FF:000009">
    <property type="entry name" value="Hepatoma-derived growth factor-related protein 2"/>
    <property type="match status" value="1"/>
</dbReference>
<dbReference type="Gene3D" id="2.30.30.140">
    <property type="match status" value="1"/>
</dbReference>
<dbReference type="Gene3D" id="1.20.930.10">
    <property type="entry name" value="Conserved domain common to transcription factors TFIIS, elongin A, CRSP70"/>
    <property type="match status" value="1"/>
</dbReference>
<dbReference type="InterPro" id="IPR036218">
    <property type="entry name" value="HIVI-bd_sf"/>
</dbReference>
<dbReference type="InterPro" id="IPR021567">
    <property type="entry name" value="LEDGF_IBD"/>
</dbReference>
<dbReference type="InterPro" id="IPR000313">
    <property type="entry name" value="PWWP_dom"/>
</dbReference>
<dbReference type="InterPro" id="IPR035441">
    <property type="entry name" value="TFIIS/LEDGF_dom_sf"/>
</dbReference>
<dbReference type="PANTHER" id="PTHR12550">
    <property type="entry name" value="HEPATOMA-DERIVED GROWTH FACTOR-RELATED"/>
    <property type="match status" value="1"/>
</dbReference>
<dbReference type="PANTHER" id="PTHR12550:SF18">
    <property type="entry name" value="HEPATOMA-DERIVED GROWTH FACTOR-RELATED PROTEIN 2"/>
    <property type="match status" value="1"/>
</dbReference>
<dbReference type="Pfam" id="PF11467">
    <property type="entry name" value="LEDGF"/>
    <property type="match status" value="1"/>
</dbReference>
<dbReference type="Pfam" id="PF00855">
    <property type="entry name" value="PWWP"/>
    <property type="match status" value="1"/>
</dbReference>
<dbReference type="SMART" id="SM00293">
    <property type="entry name" value="PWWP"/>
    <property type="match status" value="1"/>
</dbReference>
<dbReference type="SUPFAM" id="SSF140576">
    <property type="entry name" value="HIV integrase-binding domain"/>
    <property type="match status" value="1"/>
</dbReference>
<dbReference type="SUPFAM" id="SSF63748">
    <property type="entry name" value="Tudor/PWWP/MBT"/>
    <property type="match status" value="1"/>
</dbReference>
<dbReference type="PROSITE" id="PS50812">
    <property type="entry name" value="PWWP"/>
    <property type="match status" value="1"/>
</dbReference>
<name>HDGR2_HUMAN</name>
<accession>Q7Z4V5</accession>
<accession>I3L080</accession>
<accession>K7EQZ6</accession>
<accession>Q96GI5</accession>
<accession>Q9BW08</accession>
<comment type="function">
    <text evidence="7 8 9">Acts as an epigenetic regulator of myogenesis in cooperation with DPF3a (isoform 2 of DPF3/BAF45C) (PubMed:32459350). Associates with the BAF complex via its interaction with DPF3a and HDGFL2-DPF3a activate myogenic genes by increasing chromatin accessibility through recruitment of SMARCA4/BRG1/BAF190A (ATPase subunit of the BAF complex) to myogenic gene promoters (PubMed:32459350). Promotes the repair of DNA double-strand breaks (DSBs) through the homologous recombination pathway by facilitating the recruitment of the DNA endonuclease RBBP8 to the DSBs (PubMed:26721387). Preferentially binds to chromatin regions marked by H3K9me3, H3K27me3 and H3K36me2 (PubMed:26721387, PubMed:32459350). Involved in cellular growth control, through the regulation of cyclin D1 expression (PubMed:25689719).</text>
</comment>
<comment type="subunit">
    <text evidence="1 6 7 8 9">Interacts with HDGF (By similarity). Interacts with trimethylated 'Lys-36' of histone H3 (H3K36me3). Interacts with trimethylated 'Lys-79' of histone H3 (H3K79me3), but has higher affinity for H3K36me3. Interacts with IWS1 (PubMed:25689719). Interacts with H2AX, POGZ, RBBP8 and CBX1 (PubMed:26721387). Interacts with histones H3K9me3, H3K27me3 and H3K36me2 (PubMed:26721387, PubMed:32459350). Interacts with DPF3a (isoform 2 of DPF3/BAF45C) (PubMed:32459350). Interacts with SMARCA4/BRG1/BAF190A, SMARCC1/BAF155 and SMARCD1/BAF60A in a DPF3a-dependent manner (PubMed:32459350).</text>
</comment>
<comment type="interaction">
    <interactant intactId="EBI-1049136">
        <id>Q7Z4V5</id>
    </interactant>
    <interactant intactId="EBI-706637">
        <id>Q15554</id>
        <label>TERF2</label>
    </interactant>
    <organismsDiffer>false</organismsDiffer>
    <experiments>2</experiments>
</comment>
<comment type="subcellular location">
    <subcellularLocation>
        <location evidence="8">Nucleus</location>
    </subcellularLocation>
    <subcellularLocation>
        <location evidence="2">Cytoplasm</location>
    </subcellularLocation>
</comment>
<comment type="alternative products">
    <event type="alternative splicing"/>
    <isoform>
        <id>Q7Z4V5-1</id>
        <name>1</name>
        <sequence type="displayed"/>
    </isoform>
    <isoform>
        <id>Q7Z4V5-2</id>
        <name>2</name>
        <sequence type="described" ref="VSP_031116"/>
    </isoform>
    <isoform>
        <id>Q7Z4V5-3</id>
        <name>3</name>
        <sequence type="described" ref="VSP_047329"/>
    </isoform>
    <isoform>
        <id>Q7Z4V5-4</id>
        <name>4</name>
        <sequence type="described" ref="VSP_047329 VSP_031116"/>
    </isoform>
</comment>
<comment type="tissue specificity">
    <text evidence="7">Widely expressed. High expression is found in heart, skeletal muscle, ovary and testis. Overexpression is frequently observed in hepatocellular carcinoma samples.</text>
</comment>
<comment type="similarity">
    <text evidence="11">Belongs to the HDGF family.</text>
</comment>
<keyword id="KW-0002">3D-structure</keyword>
<keyword id="KW-0025">Alternative splicing</keyword>
<keyword id="KW-0175">Coiled coil</keyword>
<keyword id="KW-0963">Cytoplasm</keyword>
<keyword id="KW-0227">DNA damage</keyword>
<keyword id="KW-0233">DNA recombination</keyword>
<keyword id="KW-0234">DNA repair</keyword>
<keyword id="KW-1017">Isopeptide bond</keyword>
<keyword id="KW-0517">Myogenesis</keyword>
<keyword id="KW-0539">Nucleus</keyword>
<keyword id="KW-0597">Phosphoprotein</keyword>
<keyword id="KW-1267">Proteomics identification</keyword>
<keyword id="KW-1185">Reference proteome</keyword>
<keyword id="KW-0832">Ubl conjugation</keyword>
<sequence length="671" mass="74317">MPHAFKPGDLVFAKMKGYPHWPARIDDIADGAVKPPPNKYPIFFFGTHETAFLGPKDLFPYDKCKDKYGKPNKRKGFNEGLWEIQNNPHASYSAPPPVSSSDSEAPEANPADGSDADEDDEDRGVMAVTAVTATAASDRMESDSDSDKSSDNSGLKRKTPALKMSVSKRARKASSDLDQASVSPSEEENSESSSESEKTSDQDFTPEKKAAVRAPRRGPLGGRKKKKAPSASDSDSKADSDGAKPEPVAMARSASSSSSSSSSSDSDVSVKKPPRGRKPAEKPLPKPRGRKPKPERPPSSSSSDSDSDEVDRISEWKRRDEARRRELEARRRREQEEELRRLREQEKEEKERRRERADRGEAERGSGGSSGDELREDDEPVKKRGRKGRGRGPPSSSDSEPEAELEREAKKSAKKPQSSSTEPARKPGQKEKRVRPEEKQQAKPVKVERTRKRSEGFSMDRKVEKKKEPSVEEKLQKLHSEIKFALKVDSPDVKRCLNALEELGTLQVTSQILQKNTDVVATLKKIRRYKANKDVMEKAAEVYTRLKSRVLGPKIEAVQKVNKAGMEKEKAEEKLAGEELAGEEAPQEKAEDKPSTDLSAPVNGEATSQKGESAEDKEHEEGRDSEEGPRCGSSEDLHDSVREGPDLDRPGSDRQERERARGDSEALDEES</sequence>
<proteinExistence type="evidence at protein level"/>